<sequence length="232" mass="23952">MAKLSKRAAAIAKKIDRTKLYPVSEALTLVKETATAKFDESIDVAVQLGIDPKKSDQLVRGSVVLPAGTGKSVRVAVFAQGDKAEAARAAGADIVGLDDLAERIKGGQIDFDVVIASPDTMRVVGALGQVLGPRGLMPNPKVGTVTPDVATAVKNAKAGQVQYRTDKAGIIHATIGRASFGVEQLQTNLAALVDALQKARPAAAKGIYLRKLAVSSTMGGGARIEVASLSAN</sequence>
<evidence type="ECO:0000255" key="1">
    <source>
        <dbReference type="HAMAP-Rule" id="MF_01318"/>
    </source>
</evidence>
<evidence type="ECO:0000305" key="2"/>
<name>RL1_BORPD</name>
<keyword id="KW-0678">Repressor</keyword>
<keyword id="KW-0687">Ribonucleoprotein</keyword>
<keyword id="KW-0689">Ribosomal protein</keyword>
<keyword id="KW-0694">RNA-binding</keyword>
<keyword id="KW-0699">rRNA-binding</keyword>
<keyword id="KW-0810">Translation regulation</keyword>
<keyword id="KW-0820">tRNA-binding</keyword>
<proteinExistence type="inferred from homology"/>
<comment type="function">
    <text evidence="1">Binds directly to 23S rRNA. The L1 stalk is quite mobile in the ribosome, and is involved in E site tRNA release.</text>
</comment>
<comment type="function">
    <text evidence="1">Protein L1 is also a translational repressor protein, it controls the translation of the L11 operon by binding to its mRNA.</text>
</comment>
<comment type="subunit">
    <text evidence="1">Part of the 50S ribosomal subunit.</text>
</comment>
<comment type="similarity">
    <text evidence="1">Belongs to the universal ribosomal protein uL1 family.</text>
</comment>
<accession>A9IJ30</accession>
<organism>
    <name type="scientific">Bordetella petrii (strain ATCC BAA-461 / DSM 12804 / CCUG 43448)</name>
    <dbReference type="NCBI Taxonomy" id="340100"/>
    <lineage>
        <taxon>Bacteria</taxon>
        <taxon>Pseudomonadati</taxon>
        <taxon>Pseudomonadota</taxon>
        <taxon>Betaproteobacteria</taxon>
        <taxon>Burkholderiales</taxon>
        <taxon>Alcaligenaceae</taxon>
        <taxon>Bordetella</taxon>
    </lineage>
</organism>
<dbReference type="EMBL" id="AM902716">
    <property type="protein sequence ID" value="CAP45320.1"/>
    <property type="molecule type" value="Genomic_DNA"/>
</dbReference>
<dbReference type="SMR" id="A9IJ30"/>
<dbReference type="STRING" id="94624.Bpet4968"/>
<dbReference type="KEGG" id="bpt:Bpet4968"/>
<dbReference type="eggNOG" id="COG0081">
    <property type="taxonomic scope" value="Bacteria"/>
</dbReference>
<dbReference type="Proteomes" id="UP000001225">
    <property type="component" value="Chromosome"/>
</dbReference>
<dbReference type="GO" id="GO:0022625">
    <property type="term" value="C:cytosolic large ribosomal subunit"/>
    <property type="evidence" value="ECO:0007669"/>
    <property type="project" value="TreeGrafter"/>
</dbReference>
<dbReference type="GO" id="GO:0019843">
    <property type="term" value="F:rRNA binding"/>
    <property type="evidence" value="ECO:0007669"/>
    <property type="project" value="UniProtKB-UniRule"/>
</dbReference>
<dbReference type="GO" id="GO:0003735">
    <property type="term" value="F:structural constituent of ribosome"/>
    <property type="evidence" value="ECO:0007669"/>
    <property type="project" value="InterPro"/>
</dbReference>
<dbReference type="GO" id="GO:0000049">
    <property type="term" value="F:tRNA binding"/>
    <property type="evidence" value="ECO:0007669"/>
    <property type="project" value="UniProtKB-KW"/>
</dbReference>
<dbReference type="GO" id="GO:0006417">
    <property type="term" value="P:regulation of translation"/>
    <property type="evidence" value="ECO:0007669"/>
    <property type="project" value="UniProtKB-KW"/>
</dbReference>
<dbReference type="GO" id="GO:0006412">
    <property type="term" value="P:translation"/>
    <property type="evidence" value="ECO:0007669"/>
    <property type="project" value="UniProtKB-UniRule"/>
</dbReference>
<dbReference type="CDD" id="cd00403">
    <property type="entry name" value="Ribosomal_L1"/>
    <property type="match status" value="1"/>
</dbReference>
<dbReference type="FunFam" id="3.40.50.790:FF:000001">
    <property type="entry name" value="50S ribosomal protein L1"/>
    <property type="match status" value="1"/>
</dbReference>
<dbReference type="Gene3D" id="3.30.190.20">
    <property type="match status" value="1"/>
</dbReference>
<dbReference type="Gene3D" id="3.40.50.790">
    <property type="match status" value="1"/>
</dbReference>
<dbReference type="HAMAP" id="MF_01318_B">
    <property type="entry name" value="Ribosomal_uL1_B"/>
    <property type="match status" value="1"/>
</dbReference>
<dbReference type="InterPro" id="IPR005878">
    <property type="entry name" value="Ribosom_uL1_bac-type"/>
</dbReference>
<dbReference type="InterPro" id="IPR002143">
    <property type="entry name" value="Ribosomal_uL1"/>
</dbReference>
<dbReference type="InterPro" id="IPR023674">
    <property type="entry name" value="Ribosomal_uL1-like"/>
</dbReference>
<dbReference type="InterPro" id="IPR028364">
    <property type="entry name" value="Ribosomal_uL1/biogenesis"/>
</dbReference>
<dbReference type="InterPro" id="IPR016095">
    <property type="entry name" value="Ribosomal_uL1_3-a/b-sand"/>
</dbReference>
<dbReference type="InterPro" id="IPR023673">
    <property type="entry name" value="Ribosomal_uL1_CS"/>
</dbReference>
<dbReference type="NCBIfam" id="TIGR01169">
    <property type="entry name" value="rplA_bact"/>
    <property type="match status" value="1"/>
</dbReference>
<dbReference type="PANTHER" id="PTHR36427">
    <property type="entry name" value="54S RIBOSOMAL PROTEIN L1, MITOCHONDRIAL"/>
    <property type="match status" value="1"/>
</dbReference>
<dbReference type="PANTHER" id="PTHR36427:SF3">
    <property type="entry name" value="LARGE RIBOSOMAL SUBUNIT PROTEIN UL1M"/>
    <property type="match status" value="1"/>
</dbReference>
<dbReference type="Pfam" id="PF00687">
    <property type="entry name" value="Ribosomal_L1"/>
    <property type="match status" value="1"/>
</dbReference>
<dbReference type="PIRSF" id="PIRSF002155">
    <property type="entry name" value="Ribosomal_L1"/>
    <property type="match status" value="1"/>
</dbReference>
<dbReference type="SUPFAM" id="SSF56808">
    <property type="entry name" value="Ribosomal protein L1"/>
    <property type="match status" value="1"/>
</dbReference>
<dbReference type="PROSITE" id="PS01199">
    <property type="entry name" value="RIBOSOMAL_L1"/>
    <property type="match status" value="1"/>
</dbReference>
<feature type="chain" id="PRO_1000141367" description="Large ribosomal subunit protein uL1">
    <location>
        <begin position="1"/>
        <end position="232"/>
    </location>
</feature>
<protein>
    <recommendedName>
        <fullName evidence="1">Large ribosomal subunit protein uL1</fullName>
    </recommendedName>
    <alternativeName>
        <fullName evidence="2">50S ribosomal protein L1</fullName>
    </alternativeName>
</protein>
<reference key="1">
    <citation type="journal article" date="2008" name="BMC Genomics">
        <title>The missing link: Bordetella petrii is endowed with both the metabolic versatility of environmental bacteria and virulence traits of pathogenic Bordetellae.</title>
        <authorList>
            <person name="Gross R."/>
            <person name="Guzman C.A."/>
            <person name="Sebaihia M."/>
            <person name="Martin dos Santos V.A.P."/>
            <person name="Pieper D.H."/>
            <person name="Koebnik R."/>
            <person name="Lechner M."/>
            <person name="Bartels D."/>
            <person name="Buhrmester J."/>
            <person name="Choudhuri J.V."/>
            <person name="Ebensen T."/>
            <person name="Gaigalat L."/>
            <person name="Herrmann S."/>
            <person name="Khachane A.N."/>
            <person name="Larisch C."/>
            <person name="Link S."/>
            <person name="Linke B."/>
            <person name="Meyer F."/>
            <person name="Mormann S."/>
            <person name="Nakunst D."/>
            <person name="Rueckert C."/>
            <person name="Schneiker-Bekel S."/>
            <person name="Schulze K."/>
            <person name="Voerholter F.-J."/>
            <person name="Yevsa T."/>
            <person name="Engle J.T."/>
            <person name="Goldman W.E."/>
            <person name="Puehler A."/>
            <person name="Goebel U.B."/>
            <person name="Goesmann A."/>
            <person name="Bloecker H."/>
            <person name="Kaiser O."/>
            <person name="Martinez-Arias R."/>
        </authorList>
    </citation>
    <scope>NUCLEOTIDE SEQUENCE [LARGE SCALE GENOMIC DNA]</scope>
    <source>
        <strain>ATCC BAA-461 / DSM 12804 / CCUG 43448</strain>
    </source>
</reference>
<gene>
    <name evidence="1" type="primary">rplA</name>
    <name type="ordered locus">Bpet4968</name>
</gene>